<accession>Q6A6Z2</accession>
<organism>
    <name type="scientific">Cutibacterium acnes (strain DSM 16379 / KPA171202)</name>
    <name type="common">Propionibacterium acnes</name>
    <dbReference type="NCBI Taxonomy" id="267747"/>
    <lineage>
        <taxon>Bacteria</taxon>
        <taxon>Bacillati</taxon>
        <taxon>Actinomycetota</taxon>
        <taxon>Actinomycetes</taxon>
        <taxon>Propionibacteriales</taxon>
        <taxon>Propionibacteriaceae</taxon>
        <taxon>Cutibacterium</taxon>
    </lineage>
</organism>
<reference key="1">
    <citation type="journal article" date="2004" name="Science">
        <title>The complete genome sequence of Propionibacterium acnes, a commensal of human skin.</title>
        <authorList>
            <person name="Brueggemann H."/>
            <person name="Henne A."/>
            <person name="Hoster F."/>
            <person name="Liesegang H."/>
            <person name="Wiezer A."/>
            <person name="Strittmatter A."/>
            <person name="Hujer S."/>
            <person name="Duerre P."/>
            <person name="Gottschalk G."/>
        </authorList>
    </citation>
    <scope>NUCLEOTIDE SEQUENCE [LARGE SCALE GENOMIC DNA]</scope>
    <source>
        <strain>DSM 16379 / KPA171202</strain>
    </source>
</reference>
<name>FOLD_CUTAK</name>
<proteinExistence type="inferred from homology"/>
<sequence>MTAQKLDGKATAAAIKSELAERVAALRDQGVVPGLGTVLVGEDPASHQYVAGKHRDCAQVGIESIRVDLPADVTEEELAQKIRGLNANPHCTGYIVQLPLPRHIDTNWALNLIDPNKDADGLTPASLGRLVLNEPAPLPCTPRGIVELLTRHGIELPGANVCVVGRGTTVGRPLGLLLTRRSENCTVTLCHTGTRNLAEHTRQADIIIGAAGSPGLINADMIREGAVLVDVGVSRTPEGKIQGDFTADVWEKAAWVSPNPGGVGPMTRAMLLSNVVDRAERLTADPS</sequence>
<dbReference type="EC" id="1.5.1.5" evidence="1"/>
<dbReference type="EC" id="3.5.4.9" evidence="1"/>
<dbReference type="EMBL" id="AE017283">
    <property type="protein sequence ID" value="AAT83472.1"/>
    <property type="molecule type" value="Genomic_DNA"/>
</dbReference>
<dbReference type="RefSeq" id="WP_002517677.1">
    <property type="nucleotide sequence ID" value="NZ_CP025935.1"/>
</dbReference>
<dbReference type="SMR" id="Q6A6Z2"/>
<dbReference type="EnsemblBacteria" id="AAT83472">
    <property type="protein sequence ID" value="AAT83472"/>
    <property type="gene ID" value="PPA1743"/>
</dbReference>
<dbReference type="KEGG" id="pac:PPA1743"/>
<dbReference type="eggNOG" id="COG0190">
    <property type="taxonomic scope" value="Bacteria"/>
</dbReference>
<dbReference type="HOGENOM" id="CLU_034045_3_0_11"/>
<dbReference type="UniPathway" id="UPA00193"/>
<dbReference type="Proteomes" id="UP000000603">
    <property type="component" value="Chromosome"/>
</dbReference>
<dbReference type="GO" id="GO:0005829">
    <property type="term" value="C:cytosol"/>
    <property type="evidence" value="ECO:0007669"/>
    <property type="project" value="TreeGrafter"/>
</dbReference>
<dbReference type="GO" id="GO:0004477">
    <property type="term" value="F:methenyltetrahydrofolate cyclohydrolase activity"/>
    <property type="evidence" value="ECO:0007669"/>
    <property type="project" value="UniProtKB-UniRule"/>
</dbReference>
<dbReference type="GO" id="GO:0004488">
    <property type="term" value="F:methylenetetrahydrofolate dehydrogenase (NADP+) activity"/>
    <property type="evidence" value="ECO:0007669"/>
    <property type="project" value="UniProtKB-UniRule"/>
</dbReference>
<dbReference type="GO" id="GO:0000105">
    <property type="term" value="P:L-histidine biosynthetic process"/>
    <property type="evidence" value="ECO:0007669"/>
    <property type="project" value="UniProtKB-KW"/>
</dbReference>
<dbReference type="GO" id="GO:0009086">
    <property type="term" value="P:methionine biosynthetic process"/>
    <property type="evidence" value="ECO:0007669"/>
    <property type="project" value="UniProtKB-KW"/>
</dbReference>
<dbReference type="GO" id="GO:0006164">
    <property type="term" value="P:purine nucleotide biosynthetic process"/>
    <property type="evidence" value="ECO:0007669"/>
    <property type="project" value="UniProtKB-KW"/>
</dbReference>
<dbReference type="GO" id="GO:0035999">
    <property type="term" value="P:tetrahydrofolate interconversion"/>
    <property type="evidence" value="ECO:0007669"/>
    <property type="project" value="UniProtKB-UniRule"/>
</dbReference>
<dbReference type="CDD" id="cd01080">
    <property type="entry name" value="NAD_bind_m-THF_DH_Cyclohyd"/>
    <property type="match status" value="1"/>
</dbReference>
<dbReference type="FunFam" id="3.40.50.720:FF:000094">
    <property type="entry name" value="Bifunctional protein FolD"/>
    <property type="match status" value="1"/>
</dbReference>
<dbReference type="FunFam" id="3.40.50.10860:FF:000005">
    <property type="entry name" value="C-1-tetrahydrofolate synthase, cytoplasmic, putative"/>
    <property type="match status" value="1"/>
</dbReference>
<dbReference type="Gene3D" id="3.40.50.10860">
    <property type="entry name" value="Leucine Dehydrogenase, chain A, domain 1"/>
    <property type="match status" value="1"/>
</dbReference>
<dbReference type="Gene3D" id="3.40.50.720">
    <property type="entry name" value="NAD(P)-binding Rossmann-like Domain"/>
    <property type="match status" value="1"/>
</dbReference>
<dbReference type="HAMAP" id="MF_01576">
    <property type="entry name" value="THF_DHG_CYH"/>
    <property type="match status" value="1"/>
</dbReference>
<dbReference type="InterPro" id="IPR046346">
    <property type="entry name" value="Aminoacid_DH-like_N_sf"/>
</dbReference>
<dbReference type="InterPro" id="IPR036291">
    <property type="entry name" value="NAD(P)-bd_dom_sf"/>
</dbReference>
<dbReference type="InterPro" id="IPR000672">
    <property type="entry name" value="THF_DH/CycHdrlase"/>
</dbReference>
<dbReference type="InterPro" id="IPR020630">
    <property type="entry name" value="THF_DH/CycHdrlase_cat_dom"/>
</dbReference>
<dbReference type="InterPro" id="IPR020631">
    <property type="entry name" value="THF_DH/CycHdrlase_NAD-bd_dom"/>
</dbReference>
<dbReference type="NCBIfam" id="NF010789">
    <property type="entry name" value="PRK14193.1"/>
    <property type="match status" value="1"/>
</dbReference>
<dbReference type="PANTHER" id="PTHR48099:SF5">
    <property type="entry name" value="C-1-TETRAHYDROFOLATE SYNTHASE, CYTOPLASMIC"/>
    <property type="match status" value="1"/>
</dbReference>
<dbReference type="PANTHER" id="PTHR48099">
    <property type="entry name" value="C-1-TETRAHYDROFOLATE SYNTHASE, CYTOPLASMIC-RELATED"/>
    <property type="match status" value="1"/>
</dbReference>
<dbReference type="Pfam" id="PF00763">
    <property type="entry name" value="THF_DHG_CYH"/>
    <property type="match status" value="1"/>
</dbReference>
<dbReference type="Pfam" id="PF02882">
    <property type="entry name" value="THF_DHG_CYH_C"/>
    <property type="match status" value="1"/>
</dbReference>
<dbReference type="PRINTS" id="PR00085">
    <property type="entry name" value="THFDHDRGNASE"/>
</dbReference>
<dbReference type="SUPFAM" id="SSF53223">
    <property type="entry name" value="Aminoacid dehydrogenase-like, N-terminal domain"/>
    <property type="match status" value="1"/>
</dbReference>
<dbReference type="SUPFAM" id="SSF51735">
    <property type="entry name" value="NAD(P)-binding Rossmann-fold domains"/>
    <property type="match status" value="1"/>
</dbReference>
<protein>
    <recommendedName>
        <fullName evidence="1">Bifunctional protein FolD</fullName>
    </recommendedName>
    <domain>
        <recommendedName>
            <fullName evidence="1">Methylenetetrahydrofolate dehydrogenase</fullName>
            <ecNumber evidence="1">1.5.1.5</ecNumber>
        </recommendedName>
    </domain>
    <domain>
        <recommendedName>
            <fullName evidence="1">Methenyltetrahydrofolate cyclohydrolase</fullName>
            <ecNumber evidence="1">3.5.4.9</ecNumber>
        </recommendedName>
    </domain>
</protein>
<feature type="chain" id="PRO_0000268439" description="Bifunctional protein FolD">
    <location>
        <begin position="1"/>
        <end position="287"/>
    </location>
</feature>
<feature type="binding site" evidence="1">
    <location>
        <begin position="165"/>
        <end position="167"/>
    </location>
    <ligand>
        <name>NADP(+)</name>
        <dbReference type="ChEBI" id="CHEBI:58349"/>
    </ligand>
</feature>
<feature type="binding site" evidence="1">
    <location>
        <position position="192"/>
    </location>
    <ligand>
        <name>NADP(+)</name>
        <dbReference type="ChEBI" id="CHEBI:58349"/>
    </ligand>
</feature>
<feature type="binding site" evidence="1">
    <location>
        <position position="233"/>
    </location>
    <ligand>
        <name>NADP(+)</name>
        <dbReference type="ChEBI" id="CHEBI:58349"/>
    </ligand>
</feature>
<keyword id="KW-0028">Amino-acid biosynthesis</keyword>
<keyword id="KW-0368">Histidine biosynthesis</keyword>
<keyword id="KW-0378">Hydrolase</keyword>
<keyword id="KW-0486">Methionine biosynthesis</keyword>
<keyword id="KW-0511">Multifunctional enzyme</keyword>
<keyword id="KW-0521">NADP</keyword>
<keyword id="KW-0554">One-carbon metabolism</keyword>
<keyword id="KW-0560">Oxidoreductase</keyword>
<keyword id="KW-0658">Purine biosynthesis</keyword>
<comment type="function">
    <text evidence="1">Catalyzes the oxidation of 5,10-methylenetetrahydrofolate to 5,10-methenyltetrahydrofolate and then the hydrolysis of 5,10-methenyltetrahydrofolate to 10-formyltetrahydrofolate.</text>
</comment>
<comment type="catalytic activity">
    <reaction evidence="1">
        <text>(6R)-5,10-methylene-5,6,7,8-tetrahydrofolate + NADP(+) = (6R)-5,10-methenyltetrahydrofolate + NADPH</text>
        <dbReference type="Rhea" id="RHEA:22812"/>
        <dbReference type="ChEBI" id="CHEBI:15636"/>
        <dbReference type="ChEBI" id="CHEBI:57455"/>
        <dbReference type="ChEBI" id="CHEBI:57783"/>
        <dbReference type="ChEBI" id="CHEBI:58349"/>
        <dbReference type="EC" id="1.5.1.5"/>
    </reaction>
</comment>
<comment type="catalytic activity">
    <reaction evidence="1">
        <text>(6R)-5,10-methenyltetrahydrofolate + H2O = (6R)-10-formyltetrahydrofolate + H(+)</text>
        <dbReference type="Rhea" id="RHEA:23700"/>
        <dbReference type="ChEBI" id="CHEBI:15377"/>
        <dbReference type="ChEBI" id="CHEBI:15378"/>
        <dbReference type="ChEBI" id="CHEBI:57455"/>
        <dbReference type="ChEBI" id="CHEBI:195366"/>
        <dbReference type="EC" id="3.5.4.9"/>
    </reaction>
</comment>
<comment type="pathway">
    <text evidence="1">One-carbon metabolism; tetrahydrofolate interconversion.</text>
</comment>
<comment type="subunit">
    <text evidence="1">Homodimer.</text>
</comment>
<comment type="similarity">
    <text evidence="1">Belongs to the tetrahydrofolate dehydrogenase/cyclohydrolase family.</text>
</comment>
<evidence type="ECO:0000255" key="1">
    <source>
        <dbReference type="HAMAP-Rule" id="MF_01576"/>
    </source>
</evidence>
<gene>
    <name evidence="1" type="primary">folD</name>
    <name type="ordered locus">PPA1743</name>
</gene>